<name>PYRG_SHIB3</name>
<proteinExistence type="inferred from homology"/>
<sequence length="545" mass="60374">MTTNYIFVTGGVVSSLGKGIAAASLAAILEARGLNVTIMKLDPYINVDPGTMSPIQHGEVFVTEDGAETDLDLGHYERFIRTKMSRRNNFTTGRIYSDVLRKERRGDYLGATVQVIPHITNAIKERVLEGGEGHDVVLVEIGGTVGDIESLPFLEAIRQMAVEIGREHTLFMHLTLVPYMAASGEVKTKPTQHSVKELLSIGIQPDILICRSDRAVPANERAKIALFCNVPEKAVISLKDVDSIYKIPGLLKSQGLDDYICKRFSLNCPEANLSEWEQVIFEEANPVSEVTIGMVGKYIELPDAYKSVIEALKHGGLKNRVSVNIKLIDSQDVETRGVEILKGLDAILVPGGFGYRGVEGMITTARFARENNIPYLGICLGMQVALIDYARHVANMENANSTEFVPDCKYPVVALITEWRDENGNVEVRSEKSDLGGTMRLGAQQCQLVDDSLVRQLYNAPTIVERHRHRYEVNNMLLKQIEDAGLRVAGRSGDDQLVEIIEVPNHPWFVACQFHPEFTSTPRDGHPLFAGFVKAASEFQKRQAK</sequence>
<accession>B2TZF3</accession>
<organism>
    <name type="scientific">Shigella boydii serotype 18 (strain CDC 3083-94 / BS512)</name>
    <dbReference type="NCBI Taxonomy" id="344609"/>
    <lineage>
        <taxon>Bacteria</taxon>
        <taxon>Pseudomonadati</taxon>
        <taxon>Pseudomonadota</taxon>
        <taxon>Gammaproteobacteria</taxon>
        <taxon>Enterobacterales</taxon>
        <taxon>Enterobacteriaceae</taxon>
        <taxon>Shigella</taxon>
    </lineage>
</organism>
<reference key="1">
    <citation type="submission" date="2008-05" db="EMBL/GenBank/DDBJ databases">
        <title>Complete sequence of Shigella boydii serotype 18 strain BS512.</title>
        <authorList>
            <person name="Rasko D.A."/>
            <person name="Rosovitz M."/>
            <person name="Maurelli A.T."/>
            <person name="Myers G."/>
            <person name="Seshadri R."/>
            <person name="Cer R."/>
            <person name="Jiang L."/>
            <person name="Ravel J."/>
            <person name="Sebastian Y."/>
        </authorList>
    </citation>
    <scope>NUCLEOTIDE SEQUENCE [LARGE SCALE GENOMIC DNA]</scope>
    <source>
        <strain>CDC 3083-94 / BS512</strain>
    </source>
</reference>
<keyword id="KW-0067">ATP-binding</keyword>
<keyword id="KW-0315">Glutamine amidotransferase</keyword>
<keyword id="KW-0436">Ligase</keyword>
<keyword id="KW-0460">Magnesium</keyword>
<keyword id="KW-0479">Metal-binding</keyword>
<keyword id="KW-0547">Nucleotide-binding</keyword>
<keyword id="KW-0665">Pyrimidine biosynthesis</keyword>
<keyword id="KW-1185">Reference proteome</keyword>
<protein>
    <recommendedName>
        <fullName evidence="1">CTP synthase</fullName>
        <ecNumber evidence="1">6.3.4.2</ecNumber>
    </recommendedName>
    <alternativeName>
        <fullName evidence="1">Cytidine 5'-triphosphate synthase</fullName>
    </alternativeName>
    <alternativeName>
        <fullName evidence="1">Cytidine triphosphate synthetase</fullName>
        <shortName evidence="1">CTP synthetase</shortName>
        <shortName evidence="1">CTPS</shortName>
    </alternativeName>
    <alternativeName>
        <fullName evidence="1">UTP--ammonia ligase</fullName>
    </alternativeName>
</protein>
<gene>
    <name evidence="1" type="primary">pyrG</name>
    <name type="ordered locus">SbBS512_E3093</name>
</gene>
<feature type="chain" id="PRO_1000139579" description="CTP synthase">
    <location>
        <begin position="1"/>
        <end position="545"/>
    </location>
</feature>
<feature type="domain" description="Glutamine amidotransferase type-1" evidence="1">
    <location>
        <begin position="291"/>
        <end position="542"/>
    </location>
</feature>
<feature type="region of interest" description="Amidoligase domain" evidence="1">
    <location>
        <begin position="1"/>
        <end position="266"/>
    </location>
</feature>
<feature type="active site" description="Nucleophile; for glutamine hydrolysis" evidence="1">
    <location>
        <position position="379"/>
    </location>
</feature>
<feature type="active site" evidence="1">
    <location>
        <position position="515"/>
    </location>
</feature>
<feature type="active site" evidence="1">
    <location>
        <position position="517"/>
    </location>
</feature>
<feature type="binding site" evidence="1">
    <location>
        <position position="14"/>
    </location>
    <ligand>
        <name>CTP</name>
        <dbReference type="ChEBI" id="CHEBI:37563"/>
        <note>allosteric inhibitor</note>
    </ligand>
</feature>
<feature type="binding site" evidence="1">
    <location>
        <position position="14"/>
    </location>
    <ligand>
        <name>UTP</name>
        <dbReference type="ChEBI" id="CHEBI:46398"/>
    </ligand>
</feature>
<feature type="binding site" evidence="1">
    <location>
        <begin position="15"/>
        <end position="20"/>
    </location>
    <ligand>
        <name>ATP</name>
        <dbReference type="ChEBI" id="CHEBI:30616"/>
    </ligand>
</feature>
<feature type="binding site" evidence="1">
    <location>
        <position position="72"/>
    </location>
    <ligand>
        <name>ATP</name>
        <dbReference type="ChEBI" id="CHEBI:30616"/>
    </ligand>
</feature>
<feature type="binding site" evidence="1">
    <location>
        <position position="72"/>
    </location>
    <ligand>
        <name>Mg(2+)</name>
        <dbReference type="ChEBI" id="CHEBI:18420"/>
    </ligand>
</feature>
<feature type="binding site" evidence="1">
    <location>
        <position position="140"/>
    </location>
    <ligand>
        <name>Mg(2+)</name>
        <dbReference type="ChEBI" id="CHEBI:18420"/>
    </ligand>
</feature>
<feature type="binding site" evidence="1">
    <location>
        <begin position="147"/>
        <end position="149"/>
    </location>
    <ligand>
        <name>CTP</name>
        <dbReference type="ChEBI" id="CHEBI:37563"/>
        <note>allosteric inhibitor</note>
    </ligand>
</feature>
<feature type="binding site" evidence="1">
    <location>
        <begin position="187"/>
        <end position="192"/>
    </location>
    <ligand>
        <name>CTP</name>
        <dbReference type="ChEBI" id="CHEBI:37563"/>
        <note>allosteric inhibitor</note>
    </ligand>
</feature>
<feature type="binding site" evidence="1">
    <location>
        <begin position="187"/>
        <end position="192"/>
    </location>
    <ligand>
        <name>UTP</name>
        <dbReference type="ChEBI" id="CHEBI:46398"/>
    </ligand>
</feature>
<feature type="binding site" evidence="1">
    <location>
        <position position="223"/>
    </location>
    <ligand>
        <name>CTP</name>
        <dbReference type="ChEBI" id="CHEBI:37563"/>
        <note>allosteric inhibitor</note>
    </ligand>
</feature>
<feature type="binding site" evidence="1">
    <location>
        <position position="223"/>
    </location>
    <ligand>
        <name>UTP</name>
        <dbReference type="ChEBI" id="CHEBI:46398"/>
    </ligand>
</feature>
<feature type="binding site" evidence="1">
    <location>
        <begin position="239"/>
        <end position="241"/>
    </location>
    <ligand>
        <name>ATP</name>
        <dbReference type="ChEBI" id="CHEBI:30616"/>
    </ligand>
</feature>
<feature type="binding site" evidence="1">
    <location>
        <position position="352"/>
    </location>
    <ligand>
        <name>L-glutamine</name>
        <dbReference type="ChEBI" id="CHEBI:58359"/>
    </ligand>
</feature>
<feature type="binding site" evidence="1">
    <location>
        <begin position="380"/>
        <end position="383"/>
    </location>
    <ligand>
        <name>L-glutamine</name>
        <dbReference type="ChEBI" id="CHEBI:58359"/>
    </ligand>
</feature>
<feature type="binding site" evidence="1">
    <location>
        <position position="403"/>
    </location>
    <ligand>
        <name>L-glutamine</name>
        <dbReference type="ChEBI" id="CHEBI:58359"/>
    </ligand>
</feature>
<feature type="binding site" evidence="1">
    <location>
        <position position="470"/>
    </location>
    <ligand>
        <name>L-glutamine</name>
        <dbReference type="ChEBI" id="CHEBI:58359"/>
    </ligand>
</feature>
<evidence type="ECO:0000255" key="1">
    <source>
        <dbReference type="HAMAP-Rule" id="MF_01227"/>
    </source>
</evidence>
<comment type="function">
    <text evidence="1">Catalyzes the ATP-dependent amination of UTP to CTP with either L-glutamine or ammonia as the source of nitrogen. Regulates intracellular CTP levels through interactions with the four ribonucleotide triphosphates.</text>
</comment>
<comment type="catalytic activity">
    <reaction evidence="1">
        <text>UTP + L-glutamine + ATP + H2O = CTP + L-glutamate + ADP + phosphate + 2 H(+)</text>
        <dbReference type="Rhea" id="RHEA:26426"/>
        <dbReference type="ChEBI" id="CHEBI:15377"/>
        <dbReference type="ChEBI" id="CHEBI:15378"/>
        <dbReference type="ChEBI" id="CHEBI:29985"/>
        <dbReference type="ChEBI" id="CHEBI:30616"/>
        <dbReference type="ChEBI" id="CHEBI:37563"/>
        <dbReference type="ChEBI" id="CHEBI:43474"/>
        <dbReference type="ChEBI" id="CHEBI:46398"/>
        <dbReference type="ChEBI" id="CHEBI:58359"/>
        <dbReference type="ChEBI" id="CHEBI:456216"/>
        <dbReference type="EC" id="6.3.4.2"/>
    </reaction>
</comment>
<comment type="catalytic activity">
    <reaction evidence="1">
        <text>L-glutamine + H2O = L-glutamate + NH4(+)</text>
        <dbReference type="Rhea" id="RHEA:15889"/>
        <dbReference type="ChEBI" id="CHEBI:15377"/>
        <dbReference type="ChEBI" id="CHEBI:28938"/>
        <dbReference type="ChEBI" id="CHEBI:29985"/>
        <dbReference type="ChEBI" id="CHEBI:58359"/>
    </reaction>
</comment>
<comment type="catalytic activity">
    <reaction evidence="1">
        <text>UTP + NH4(+) + ATP = CTP + ADP + phosphate + 2 H(+)</text>
        <dbReference type="Rhea" id="RHEA:16597"/>
        <dbReference type="ChEBI" id="CHEBI:15378"/>
        <dbReference type="ChEBI" id="CHEBI:28938"/>
        <dbReference type="ChEBI" id="CHEBI:30616"/>
        <dbReference type="ChEBI" id="CHEBI:37563"/>
        <dbReference type="ChEBI" id="CHEBI:43474"/>
        <dbReference type="ChEBI" id="CHEBI:46398"/>
        <dbReference type="ChEBI" id="CHEBI:456216"/>
    </reaction>
</comment>
<comment type="activity regulation">
    <text evidence="1">Allosterically activated by GTP, when glutamine is the substrate; GTP has no effect on the reaction when ammonia is the substrate. The allosteric effector GTP functions by stabilizing the protein conformation that binds the tetrahedral intermediate(s) formed during glutamine hydrolysis. Inhibited by the product CTP, via allosteric rather than competitive inhibition.</text>
</comment>
<comment type="pathway">
    <text evidence="1">Pyrimidine metabolism; CTP biosynthesis via de novo pathway; CTP from UDP: step 2/2.</text>
</comment>
<comment type="subunit">
    <text evidence="1">Homotetramer.</text>
</comment>
<comment type="miscellaneous">
    <text evidence="1">CTPSs have evolved a hybrid strategy for distinguishing between UTP and CTP. The overlapping regions of the product feedback inhibitory and substrate sites recognize a common feature in both compounds, the triphosphate moiety. To differentiate isosteric substrate and product pyrimidine rings, an additional pocket far from the expected kinase/ligase catalytic site, specifically recognizes the cytosine and ribose portions of the product inhibitor.</text>
</comment>
<comment type="similarity">
    <text evidence="1">Belongs to the CTP synthase family.</text>
</comment>
<dbReference type="EC" id="6.3.4.2" evidence="1"/>
<dbReference type="EMBL" id="CP001063">
    <property type="protein sequence ID" value="ACD09903.1"/>
    <property type="molecule type" value="Genomic_DNA"/>
</dbReference>
<dbReference type="RefSeq" id="WP_000210878.1">
    <property type="nucleotide sequence ID" value="NC_010658.1"/>
</dbReference>
<dbReference type="SMR" id="B2TZF3"/>
<dbReference type="STRING" id="344609.SbBS512_E3093"/>
<dbReference type="MEROPS" id="C26.964"/>
<dbReference type="GeneID" id="93779218"/>
<dbReference type="KEGG" id="sbc:SbBS512_E3093"/>
<dbReference type="HOGENOM" id="CLU_011675_5_0_6"/>
<dbReference type="UniPathway" id="UPA00159">
    <property type="reaction ID" value="UER00277"/>
</dbReference>
<dbReference type="Proteomes" id="UP000001030">
    <property type="component" value="Chromosome"/>
</dbReference>
<dbReference type="GO" id="GO:0005829">
    <property type="term" value="C:cytosol"/>
    <property type="evidence" value="ECO:0007669"/>
    <property type="project" value="TreeGrafter"/>
</dbReference>
<dbReference type="GO" id="GO:0005524">
    <property type="term" value="F:ATP binding"/>
    <property type="evidence" value="ECO:0007669"/>
    <property type="project" value="UniProtKB-KW"/>
</dbReference>
<dbReference type="GO" id="GO:0003883">
    <property type="term" value="F:CTP synthase activity"/>
    <property type="evidence" value="ECO:0007669"/>
    <property type="project" value="UniProtKB-UniRule"/>
</dbReference>
<dbReference type="GO" id="GO:0004359">
    <property type="term" value="F:glutaminase activity"/>
    <property type="evidence" value="ECO:0007669"/>
    <property type="project" value="RHEA"/>
</dbReference>
<dbReference type="GO" id="GO:0042802">
    <property type="term" value="F:identical protein binding"/>
    <property type="evidence" value="ECO:0007669"/>
    <property type="project" value="TreeGrafter"/>
</dbReference>
<dbReference type="GO" id="GO:0046872">
    <property type="term" value="F:metal ion binding"/>
    <property type="evidence" value="ECO:0007669"/>
    <property type="project" value="UniProtKB-KW"/>
</dbReference>
<dbReference type="GO" id="GO:0044210">
    <property type="term" value="P:'de novo' CTP biosynthetic process"/>
    <property type="evidence" value="ECO:0007669"/>
    <property type="project" value="UniProtKB-UniRule"/>
</dbReference>
<dbReference type="GO" id="GO:0019856">
    <property type="term" value="P:pyrimidine nucleobase biosynthetic process"/>
    <property type="evidence" value="ECO:0007669"/>
    <property type="project" value="TreeGrafter"/>
</dbReference>
<dbReference type="CDD" id="cd03113">
    <property type="entry name" value="CTPS_N"/>
    <property type="match status" value="1"/>
</dbReference>
<dbReference type="CDD" id="cd01746">
    <property type="entry name" value="GATase1_CTP_Synthase"/>
    <property type="match status" value="1"/>
</dbReference>
<dbReference type="FunFam" id="3.40.50.300:FF:000009">
    <property type="entry name" value="CTP synthase"/>
    <property type="match status" value="1"/>
</dbReference>
<dbReference type="FunFam" id="3.40.50.880:FF:000002">
    <property type="entry name" value="CTP synthase"/>
    <property type="match status" value="1"/>
</dbReference>
<dbReference type="Gene3D" id="3.40.50.880">
    <property type="match status" value="1"/>
</dbReference>
<dbReference type="Gene3D" id="3.40.50.300">
    <property type="entry name" value="P-loop containing nucleotide triphosphate hydrolases"/>
    <property type="match status" value="1"/>
</dbReference>
<dbReference type="HAMAP" id="MF_01227">
    <property type="entry name" value="PyrG"/>
    <property type="match status" value="1"/>
</dbReference>
<dbReference type="InterPro" id="IPR029062">
    <property type="entry name" value="Class_I_gatase-like"/>
</dbReference>
<dbReference type="InterPro" id="IPR004468">
    <property type="entry name" value="CTP_synthase"/>
</dbReference>
<dbReference type="InterPro" id="IPR017456">
    <property type="entry name" value="CTP_synthase_N"/>
</dbReference>
<dbReference type="InterPro" id="IPR017926">
    <property type="entry name" value="GATASE"/>
</dbReference>
<dbReference type="InterPro" id="IPR033828">
    <property type="entry name" value="GATase1_CTP_Synthase"/>
</dbReference>
<dbReference type="InterPro" id="IPR027417">
    <property type="entry name" value="P-loop_NTPase"/>
</dbReference>
<dbReference type="NCBIfam" id="NF003792">
    <property type="entry name" value="PRK05380.1"/>
    <property type="match status" value="1"/>
</dbReference>
<dbReference type="NCBIfam" id="TIGR00337">
    <property type="entry name" value="PyrG"/>
    <property type="match status" value="1"/>
</dbReference>
<dbReference type="PANTHER" id="PTHR11550">
    <property type="entry name" value="CTP SYNTHASE"/>
    <property type="match status" value="1"/>
</dbReference>
<dbReference type="PANTHER" id="PTHR11550:SF0">
    <property type="entry name" value="CTP SYNTHASE-RELATED"/>
    <property type="match status" value="1"/>
</dbReference>
<dbReference type="Pfam" id="PF06418">
    <property type="entry name" value="CTP_synth_N"/>
    <property type="match status" value="1"/>
</dbReference>
<dbReference type="Pfam" id="PF00117">
    <property type="entry name" value="GATase"/>
    <property type="match status" value="1"/>
</dbReference>
<dbReference type="SUPFAM" id="SSF52317">
    <property type="entry name" value="Class I glutamine amidotransferase-like"/>
    <property type="match status" value="1"/>
</dbReference>
<dbReference type="SUPFAM" id="SSF52540">
    <property type="entry name" value="P-loop containing nucleoside triphosphate hydrolases"/>
    <property type="match status" value="1"/>
</dbReference>
<dbReference type="PROSITE" id="PS51273">
    <property type="entry name" value="GATASE_TYPE_1"/>
    <property type="match status" value="1"/>
</dbReference>